<protein>
    <recommendedName>
        <fullName>Zinc finger protein 648</fullName>
    </recommendedName>
</protein>
<comment type="function">
    <text>May be involved in transcriptional regulation.</text>
</comment>
<comment type="interaction">
    <interactant intactId="EBI-11985915">
        <id>Q5T619</id>
    </interactant>
    <interactant intactId="EBI-4400025">
        <id>Q9Y2T1</id>
        <label>AXIN2</label>
    </interactant>
    <organismsDiffer>false</organismsDiffer>
    <experiments>3</experiments>
</comment>
<comment type="interaction">
    <interactant intactId="EBI-11985915">
        <id>Q5T619</id>
    </interactant>
    <interactant intactId="EBI-742722">
        <id>Q9BUH8</id>
        <label>BEGAIN</label>
    </interactant>
    <organismsDiffer>false</organismsDiffer>
    <experiments>5</experiments>
</comment>
<comment type="interaction">
    <interactant intactId="EBI-11985915">
        <id>Q5T619</id>
    </interactant>
    <interactant intactId="EBI-11975051">
        <id>Q8TD16-2</id>
        <label>BICD2</label>
    </interactant>
    <organismsDiffer>false</organismsDiffer>
    <experiments>3</experiments>
</comment>
<comment type="interaction">
    <interactant intactId="EBI-11985915">
        <id>Q5T619</id>
    </interactant>
    <interactant intactId="EBI-739580">
        <id>Q13137</id>
        <label>CALCOCO2</label>
    </interactant>
    <organismsDiffer>false</organismsDiffer>
    <experiments>3</experiments>
</comment>
<comment type="interaction">
    <interactant intactId="EBI-11985915">
        <id>Q5T619</id>
    </interactant>
    <interactant intactId="EBI-12114736">
        <id>Q9BXL6-2</id>
        <label>CARD14</label>
    </interactant>
    <organismsDiffer>false</organismsDiffer>
    <experiments>3</experiments>
</comment>
<comment type="interaction">
    <interactant intactId="EBI-11985915">
        <id>Q5T619</id>
    </interactant>
    <interactant intactId="EBI-744556">
        <id>Q96HB5</id>
        <label>CCDC120</label>
    </interactant>
    <organismsDiffer>false</organismsDiffer>
    <experiments>3</experiments>
</comment>
<comment type="interaction">
    <interactant intactId="EBI-11985915">
        <id>Q5T619</id>
    </interactant>
    <interactant intactId="EBI-10961624">
        <id>Q2TAC2-2</id>
        <label>CCDC57</label>
    </interactant>
    <organismsDiffer>false</organismsDiffer>
    <experiments>3</experiments>
</comment>
<comment type="interaction">
    <interactant intactId="EBI-11985915">
        <id>Q5T619</id>
    </interactant>
    <interactant intactId="EBI-11063830">
        <id>Q86X02</id>
        <label>CDR2L</label>
    </interactant>
    <organismsDiffer>false</organismsDiffer>
    <experiments>3</experiments>
</comment>
<comment type="interaction">
    <interactant intactId="EBI-11985915">
        <id>Q5T619</id>
    </interactant>
    <interactant intactId="EBI-739624">
        <id>Q8NHQ1</id>
        <label>CEP70</label>
    </interactant>
    <organismsDiffer>false</organismsDiffer>
    <experiments>3</experiments>
</comment>
<comment type="interaction">
    <interactant intactId="EBI-11985915">
        <id>Q5T619</id>
    </interactant>
    <interactant intactId="EBI-3867333">
        <id>A8MQ03</id>
        <label>CYSRT1</label>
    </interactant>
    <organismsDiffer>false</organismsDiffer>
    <experiments>3</experiments>
</comment>
<comment type="interaction">
    <interactant intactId="EBI-11985915">
        <id>Q5T619</id>
    </interactant>
    <interactant intactId="EBI-739789">
        <id>Q92997</id>
        <label>DVL3</label>
    </interactant>
    <organismsDiffer>false</organismsDiffer>
    <experiments>3</experiments>
</comment>
<comment type="interaction">
    <interactant intactId="EBI-11985915">
        <id>Q5T619</id>
    </interactant>
    <interactant intactId="EBI-749523">
        <id>Q96CN4</id>
        <label>EVI5L</label>
    </interactant>
    <organismsDiffer>false</organismsDiffer>
    <experiments>3</experiments>
</comment>
<comment type="interaction">
    <interactant intactId="EBI-11985915">
        <id>Q5T619</id>
    </interactant>
    <interactant intactId="EBI-5661036">
        <id>A1L4K1</id>
        <label>FSD2</label>
    </interactant>
    <organismsDiffer>false</organismsDiffer>
    <experiments>3</experiments>
</comment>
<comment type="interaction">
    <interactant intactId="EBI-11985915">
        <id>Q5T619</id>
    </interactant>
    <interactant intactId="EBI-618309">
        <id>Q08379</id>
        <label>GOLGA2</label>
    </interactant>
    <organismsDiffer>false</organismsDiffer>
    <experiments>3</experiments>
</comment>
<comment type="interaction">
    <interactant intactId="EBI-11985915">
        <id>Q5T619</id>
    </interactant>
    <interactant intactId="EBI-5916454">
        <id>A6NEM1</id>
        <label>GOLGA6L9</label>
    </interactant>
    <organismsDiffer>false</organismsDiffer>
    <experiments>3</experiments>
</comment>
<comment type="interaction">
    <interactant intactId="EBI-11985915">
        <id>Q5T619</id>
    </interactant>
    <interactant intactId="EBI-712814">
        <id>P54257</id>
        <label>HAP1</label>
    </interactant>
    <organismsDiffer>false</organismsDiffer>
    <experiments>3</experiments>
</comment>
<comment type="interaction">
    <interactant intactId="EBI-11985915">
        <id>Q5T619</id>
    </interactant>
    <interactant intactId="EBI-10961706">
        <id>Q96ED9-2</id>
        <label>HOOK2</label>
    </interactant>
    <organismsDiffer>false</organismsDiffer>
    <experiments>3</experiments>
</comment>
<comment type="interaction">
    <interactant intactId="EBI-11985915">
        <id>Q5T619</id>
    </interactant>
    <interactant intactId="EBI-7116203">
        <id>O75031</id>
        <label>HSF2BP</label>
    </interactant>
    <organismsDiffer>false</organismsDiffer>
    <experiments>3</experiments>
</comment>
<comment type="interaction">
    <interactant intactId="EBI-11985915">
        <id>Q5T619</id>
    </interactant>
    <interactant intactId="EBI-2556193">
        <id>Q63ZY3</id>
        <label>KANK2</label>
    </interactant>
    <organismsDiffer>false</organismsDiffer>
    <experiments>3</experiments>
</comment>
<comment type="interaction">
    <interactant intactId="EBI-11985915">
        <id>Q5T619</id>
    </interactant>
    <interactant intactId="EBI-11959885">
        <id>Q07627</id>
        <label>KRTAP1-1</label>
    </interactant>
    <organismsDiffer>false</organismsDiffer>
    <experiments>3</experiments>
</comment>
<comment type="interaction">
    <interactant intactId="EBI-11985915">
        <id>Q5T619</id>
    </interactant>
    <interactant intactId="EBI-10171774">
        <id>P60410</id>
        <label>KRTAP10-8</label>
    </interactant>
    <organismsDiffer>false</organismsDiffer>
    <experiments>3</experiments>
</comment>
<comment type="interaction">
    <interactant intactId="EBI-11985915">
        <id>Q5T619</id>
    </interactant>
    <interactant intactId="EBI-11953334">
        <id>P60328</id>
        <label>KRTAP12-3</label>
    </interactant>
    <organismsDiffer>false</organismsDiffer>
    <experiments>3</experiments>
</comment>
<comment type="interaction">
    <interactant intactId="EBI-11985915">
        <id>Q5T619</id>
    </interactant>
    <interactant intactId="EBI-740738">
        <id>O95751</id>
        <label>LDOC1</label>
    </interactant>
    <organismsDiffer>false</organismsDiffer>
    <experiments>3</experiments>
</comment>
<comment type="interaction">
    <interactant intactId="EBI-11985915">
        <id>Q5T619</id>
    </interactant>
    <interactant intactId="EBI-741037">
        <id>Q9BRK4</id>
        <label>LZTS2</label>
    </interactant>
    <organismsDiffer>false</organismsDiffer>
    <experiments>3</experiments>
</comment>
<comment type="interaction">
    <interactant intactId="EBI-11985915">
        <id>Q5T619</id>
    </interactant>
    <interactant intactId="EBI-307531">
        <id>P23508</id>
        <label>MCC</label>
    </interactant>
    <organismsDiffer>false</organismsDiffer>
    <experiments>3</experiments>
</comment>
<comment type="interaction">
    <interactant intactId="EBI-11985915">
        <id>Q5T619</id>
    </interactant>
    <interactant intactId="EBI-724076">
        <id>Q99750</id>
        <label>MDFI</label>
    </interactant>
    <organismsDiffer>false</organismsDiffer>
    <experiments>5</experiments>
</comment>
<comment type="interaction">
    <interactant intactId="EBI-11985915">
        <id>Q5T619</id>
    </interactant>
    <interactant intactId="EBI-16439278">
        <id>Q6FHY5</id>
        <label>MEOX2</label>
    </interactant>
    <organismsDiffer>false</organismsDiffer>
    <experiments>3</experiments>
</comment>
<comment type="interaction">
    <interactant intactId="EBI-11985915">
        <id>Q5T619</id>
    </interactant>
    <interactant intactId="EBI-10172526">
        <id>Q9UJV3-2</id>
        <label>MID2</label>
    </interactant>
    <organismsDiffer>false</organismsDiffer>
    <experiments>3</experiments>
</comment>
<comment type="interaction">
    <interactant intactId="EBI-11985915">
        <id>Q5T619</id>
    </interactant>
    <interactant intactId="EBI-11522433">
        <id>Q5JR59-3</id>
        <label>MTUS2</label>
    </interactant>
    <organismsDiffer>false</organismsDiffer>
    <experiments>3</experiments>
</comment>
<comment type="interaction">
    <interactant intactId="EBI-11985915">
        <id>Q5T619</id>
    </interactant>
    <interactant intactId="EBI-22310682">
        <id>P0DPK4</id>
        <label>NOTCH2NLC</label>
    </interactant>
    <organismsDiffer>false</organismsDiffer>
    <experiments>3</experiments>
</comment>
<comment type="interaction">
    <interactant intactId="EBI-11985915">
        <id>Q5T619</id>
    </interactant>
    <interactant intactId="EBI-10297093">
        <id>Q9BRQ3</id>
        <label>NUDT22</label>
    </interactant>
    <organismsDiffer>false</organismsDiffer>
    <experiments>3</experiments>
</comment>
<comment type="interaction">
    <interactant intactId="EBI-11985915">
        <id>Q5T619</id>
    </interactant>
    <interactant intactId="EBI-1051317">
        <id>Q9H4L5</id>
        <label>OSBPL3</label>
    </interactant>
    <organismsDiffer>false</organismsDiffer>
    <experiments>3</experiments>
</comment>
<comment type="interaction">
    <interactant intactId="EBI-11985915">
        <id>Q5T619</id>
    </interactant>
    <interactant intactId="EBI-949255">
        <id>Q58EX7</id>
        <label>PLEKHG4</label>
    </interactant>
    <organismsDiffer>false</organismsDiffer>
    <experiments>3</experiments>
</comment>
<comment type="interaction">
    <interactant intactId="EBI-11985915">
        <id>Q5T619</id>
    </interactant>
    <interactant intactId="EBI-1210429">
        <id>Q9NYW8</id>
        <label>RBAK</label>
    </interactant>
    <organismsDiffer>false</organismsDiffer>
    <experiments>3</experiments>
</comment>
<comment type="interaction">
    <interactant intactId="EBI-11985915">
        <id>Q5T619</id>
    </interactant>
    <interactant intactId="EBI-726876">
        <id>Q6NUQ1</id>
        <label>RINT1</label>
    </interactant>
    <organismsDiffer>false</organismsDiffer>
    <experiments>3</experiments>
</comment>
<comment type="interaction">
    <interactant intactId="EBI-11985915">
        <id>Q5T619</id>
    </interactant>
    <interactant intactId="EBI-2952709">
        <id>Q92622</id>
        <label>RUBCN</label>
    </interactant>
    <organismsDiffer>false</organismsDiffer>
    <experiments>3</experiments>
</comment>
<comment type="interaction">
    <interactant intactId="EBI-11985915">
        <id>Q5T619</id>
    </interactant>
    <interactant intactId="EBI-2212028">
        <id>Q9Y2D8</id>
        <label>SSX2IP</label>
    </interactant>
    <organismsDiffer>false</organismsDiffer>
    <experiments>3</experiments>
</comment>
<comment type="interaction">
    <interactant intactId="EBI-11985915">
        <id>Q5T619</id>
    </interactant>
    <interactant intactId="EBI-12099160">
        <id>Q8N205-2</id>
        <label>SYNE4</label>
    </interactant>
    <organismsDiffer>false</organismsDiffer>
    <experiments>3</experiments>
</comment>
<comment type="interaction">
    <interactant intactId="EBI-11985915">
        <id>Q5T619</id>
    </interactant>
    <interactant intactId="EBI-13323487">
        <id>Q8NA77</id>
        <label>TEX19</label>
    </interactant>
    <organismsDiffer>false</organismsDiffer>
    <experiments>3</experiments>
</comment>
<comment type="interaction">
    <interactant intactId="EBI-11985915">
        <id>Q5T619</id>
    </interactant>
    <interactant intactId="EBI-949753">
        <id>Q63HR2</id>
        <label>TNS2</label>
    </interactant>
    <organismsDiffer>false</organismsDiffer>
    <experiments>3</experiments>
</comment>
<comment type="interaction">
    <interactant intactId="EBI-11985915">
        <id>Q5T619</id>
    </interactant>
    <interactant intactId="EBI-359224">
        <id>Q13077</id>
        <label>TRAF1</label>
    </interactant>
    <organismsDiffer>false</organismsDiffer>
    <experiments>3</experiments>
</comment>
<comment type="interaction">
    <interactant intactId="EBI-11985915">
        <id>Q5T619</id>
    </interactant>
    <interactant intactId="EBI-355744">
        <id>Q12933</id>
        <label>TRAF2</label>
    </interactant>
    <organismsDiffer>false</organismsDiffer>
    <experiments>3</experiments>
</comment>
<comment type="interaction">
    <interactant intactId="EBI-11985915">
        <id>Q5T619</id>
    </interactant>
    <interactant intactId="EBI-725997">
        <id>Q8WV44</id>
        <label>TRIM41</label>
    </interactant>
    <organismsDiffer>false</organismsDiffer>
    <experiments>3</experiments>
</comment>
<comment type="interaction">
    <interactant intactId="EBI-11985915">
        <id>Q5T619</id>
    </interactant>
    <interactant intactId="EBI-742740">
        <id>Q96BR9</id>
        <label>ZBTB8A</label>
    </interactant>
    <organismsDiffer>false</organismsDiffer>
    <experiments>3</experiments>
</comment>
<comment type="interaction">
    <interactant intactId="EBI-11985915">
        <id>Q5T619</id>
    </interactant>
    <interactant intactId="EBI-954111">
        <id>Q8WW36</id>
        <label>ZCCHC13</label>
    </interactant>
    <organismsDiffer>false</organismsDiffer>
    <experiments>3</experiments>
</comment>
<comment type="interaction">
    <interactant intactId="EBI-11985915">
        <id>Q5T619</id>
    </interactant>
    <interactant intactId="EBI-10177272">
        <id>P15622-3</id>
        <label>ZNF250</label>
    </interactant>
    <organismsDiffer>false</organismsDiffer>
    <experiments>5</experiments>
</comment>
<comment type="interaction">
    <interactant intactId="EBI-11985915">
        <id>Q5T619</id>
    </interactant>
    <interactant intactId="EBI-10241410">
        <id>Q3ZCT1</id>
        <label>ZNF260</label>
    </interactant>
    <organismsDiffer>false</organismsDiffer>
    <experiments>3</experiments>
</comment>
<comment type="interaction">
    <interactant intactId="EBI-11985915">
        <id>Q5T619</id>
    </interactant>
    <interactant intactId="EBI-17263125">
        <id>Q9NSD4</id>
        <label>ZNF275</label>
    </interactant>
    <organismsDiffer>false</organismsDiffer>
    <experiments>3</experiments>
</comment>
<comment type="interaction">
    <interactant intactId="EBI-11985915">
        <id>Q5T619</id>
    </interactant>
    <interactant intactId="EBI-1210473">
        <id>Q96PQ6</id>
        <label>ZNF317</label>
    </interactant>
    <organismsDiffer>false</organismsDiffer>
    <experiments>3</experiments>
</comment>
<comment type="interaction">
    <interactant intactId="EBI-11985915">
        <id>Q5T619</id>
    </interactant>
    <interactant intactId="EBI-10252492">
        <id>Q6P1L6</id>
        <label>ZNF343</label>
    </interactant>
    <organismsDiffer>false</organismsDiffer>
    <experiments>3</experiments>
</comment>
<comment type="interaction">
    <interactant intactId="EBI-11985915">
        <id>Q5T619</id>
    </interactant>
    <interactant intactId="EBI-11962468">
        <id>Q7Z4V0</id>
        <label>ZNF438</label>
    </interactant>
    <organismsDiffer>false</organismsDiffer>
    <experiments>3</experiments>
</comment>
<comment type="interaction">
    <interactant intactId="EBI-11985915">
        <id>Q5T619</id>
    </interactant>
    <interactant intactId="EBI-2555731">
        <id>Q9H707</id>
        <label>ZNF552</label>
    </interactant>
    <organismsDiffer>false</organismsDiffer>
    <experiments>3</experiments>
</comment>
<comment type="interaction">
    <interactant intactId="EBI-11985915">
        <id>Q5T619</id>
    </interactant>
    <interactant intactId="EBI-4395669">
        <id>Q6ZNG0</id>
        <label>ZNF620</label>
    </interactant>
    <organismsDiffer>false</organismsDiffer>
    <experiments>3</experiments>
</comment>
<comment type="interaction">
    <interactant intactId="EBI-11985915">
        <id>Q5T619</id>
    </interactant>
    <interactant intactId="EBI-625509">
        <id>Q8N720</id>
        <label>ZNF655</label>
    </interactant>
    <organismsDiffer>false</organismsDiffer>
    <experiments>3</experiments>
</comment>
<comment type="interaction">
    <interactant intactId="EBI-11985915">
        <id>Q5T619</id>
    </interactant>
    <interactant intactId="EBI-7138235">
        <id>Q9NQZ8</id>
        <label>ZNF71</label>
    </interactant>
    <organismsDiffer>false</organismsDiffer>
    <experiments>3</experiments>
</comment>
<comment type="interaction">
    <interactant intactId="EBI-11985915">
        <id>Q5T619</id>
    </interactant>
    <interactant intactId="EBI-1210580">
        <id>Q9H5H4</id>
        <label>ZNF768</label>
    </interactant>
    <organismsDiffer>false</organismsDiffer>
    <experiments>3</experiments>
</comment>
<comment type="interaction">
    <interactant intactId="EBI-11985915">
        <id>Q5T619</id>
    </interactant>
    <interactant intactId="EBI-10240849">
        <id>Q3KQV3</id>
        <label>ZNF792</label>
    </interactant>
    <organismsDiffer>false</organismsDiffer>
    <experiments>3</experiments>
</comment>
<comment type="interaction">
    <interactant intactId="EBI-11985915">
        <id>Q5T619</id>
    </interactant>
    <interactant intactId="EBI-11962574">
        <id>Q96EG3</id>
        <label>ZNF837</label>
    </interactant>
    <organismsDiffer>false</organismsDiffer>
    <experiments>3</experiments>
</comment>
<comment type="interaction">
    <interactant intactId="EBI-11985915">
        <id>Q5T619</id>
    </interactant>
    <interactant intactId="EBI-527853">
        <id>Q9UGI0</id>
        <label>ZRANB1</label>
    </interactant>
    <organismsDiffer>false</organismsDiffer>
    <experiments>3</experiments>
</comment>
<comment type="subcellular location">
    <subcellularLocation>
        <location evidence="3">Nucleus</location>
    </subcellularLocation>
</comment>
<comment type="similarity">
    <text evidence="3">Belongs to the krueppel C2H2-type zinc-finger protein family.</text>
</comment>
<keyword id="KW-0238">DNA-binding</keyword>
<keyword id="KW-0479">Metal-binding</keyword>
<keyword id="KW-0539">Nucleus</keyword>
<keyword id="KW-1267">Proteomics identification</keyword>
<keyword id="KW-1185">Reference proteome</keyword>
<keyword id="KW-0677">Repeat</keyword>
<keyword id="KW-0804">Transcription</keyword>
<keyword id="KW-0805">Transcription regulation</keyword>
<keyword id="KW-0862">Zinc</keyword>
<keyword id="KW-0863">Zinc-finger</keyword>
<evidence type="ECO:0000255" key="1">
    <source>
        <dbReference type="PROSITE-ProRule" id="PRU00042"/>
    </source>
</evidence>
<evidence type="ECO:0000256" key="2">
    <source>
        <dbReference type="SAM" id="MobiDB-lite"/>
    </source>
</evidence>
<evidence type="ECO:0000305" key="3"/>
<reference key="1">
    <citation type="journal article" date="2006" name="Nature">
        <title>The DNA sequence and biological annotation of human chromosome 1.</title>
        <authorList>
            <person name="Gregory S.G."/>
            <person name="Barlow K.F."/>
            <person name="McLay K.E."/>
            <person name="Kaul R."/>
            <person name="Swarbreck D."/>
            <person name="Dunham A."/>
            <person name="Scott C.E."/>
            <person name="Howe K.L."/>
            <person name="Woodfine K."/>
            <person name="Spencer C.C.A."/>
            <person name="Jones M.C."/>
            <person name="Gillson C."/>
            <person name="Searle S."/>
            <person name="Zhou Y."/>
            <person name="Kokocinski F."/>
            <person name="McDonald L."/>
            <person name="Evans R."/>
            <person name="Phillips K."/>
            <person name="Atkinson A."/>
            <person name="Cooper R."/>
            <person name="Jones C."/>
            <person name="Hall R.E."/>
            <person name="Andrews T.D."/>
            <person name="Lloyd C."/>
            <person name="Ainscough R."/>
            <person name="Almeida J.P."/>
            <person name="Ambrose K.D."/>
            <person name="Anderson F."/>
            <person name="Andrew R.W."/>
            <person name="Ashwell R.I.S."/>
            <person name="Aubin K."/>
            <person name="Babbage A.K."/>
            <person name="Bagguley C.L."/>
            <person name="Bailey J."/>
            <person name="Beasley H."/>
            <person name="Bethel G."/>
            <person name="Bird C.P."/>
            <person name="Bray-Allen S."/>
            <person name="Brown J.Y."/>
            <person name="Brown A.J."/>
            <person name="Buckley D."/>
            <person name="Burton J."/>
            <person name="Bye J."/>
            <person name="Carder C."/>
            <person name="Chapman J.C."/>
            <person name="Clark S.Y."/>
            <person name="Clarke G."/>
            <person name="Clee C."/>
            <person name="Cobley V."/>
            <person name="Collier R.E."/>
            <person name="Corby N."/>
            <person name="Coville G.J."/>
            <person name="Davies J."/>
            <person name="Deadman R."/>
            <person name="Dunn M."/>
            <person name="Earthrowl M."/>
            <person name="Ellington A.G."/>
            <person name="Errington H."/>
            <person name="Frankish A."/>
            <person name="Frankland J."/>
            <person name="French L."/>
            <person name="Garner P."/>
            <person name="Garnett J."/>
            <person name="Gay L."/>
            <person name="Ghori M.R.J."/>
            <person name="Gibson R."/>
            <person name="Gilby L.M."/>
            <person name="Gillett W."/>
            <person name="Glithero R.J."/>
            <person name="Grafham D.V."/>
            <person name="Griffiths C."/>
            <person name="Griffiths-Jones S."/>
            <person name="Grocock R."/>
            <person name="Hammond S."/>
            <person name="Harrison E.S.I."/>
            <person name="Hart E."/>
            <person name="Haugen E."/>
            <person name="Heath P.D."/>
            <person name="Holmes S."/>
            <person name="Holt K."/>
            <person name="Howden P.J."/>
            <person name="Hunt A.R."/>
            <person name="Hunt S.E."/>
            <person name="Hunter G."/>
            <person name="Isherwood J."/>
            <person name="James R."/>
            <person name="Johnson C."/>
            <person name="Johnson D."/>
            <person name="Joy A."/>
            <person name="Kay M."/>
            <person name="Kershaw J.K."/>
            <person name="Kibukawa M."/>
            <person name="Kimberley A.M."/>
            <person name="King A."/>
            <person name="Knights A.J."/>
            <person name="Lad H."/>
            <person name="Laird G."/>
            <person name="Lawlor S."/>
            <person name="Leongamornlert D.A."/>
            <person name="Lloyd D.M."/>
            <person name="Loveland J."/>
            <person name="Lovell J."/>
            <person name="Lush M.J."/>
            <person name="Lyne R."/>
            <person name="Martin S."/>
            <person name="Mashreghi-Mohammadi M."/>
            <person name="Matthews L."/>
            <person name="Matthews N.S.W."/>
            <person name="McLaren S."/>
            <person name="Milne S."/>
            <person name="Mistry S."/>
            <person name="Moore M.J.F."/>
            <person name="Nickerson T."/>
            <person name="O'Dell C.N."/>
            <person name="Oliver K."/>
            <person name="Palmeiri A."/>
            <person name="Palmer S.A."/>
            <person name="Parker A."/>
            <person name="Patel D."/>
            <person name="Pearce A.V."/>
            <person name="Peck A.I."/>
            <person name="Pelan S."/>
            <person name="Phelps K."/>
            <person name="Phillimore B.J."/>
            <person name="Plumb R."/>
            <person name="Rajan J."/>
            <person name="Raymond C."/>
            <person name="Rouse G."/>
            <person name="Saenphimmachak C."/>
            <person name="Sehra H.K."/>
            <person name="Sheridan E."/>
            <person name="Shownkeen R."/>
            <person name="Sims S."/>
            <person name="Skuce C.D."/>
            <person name="Smith M."/>
            <person name="Steward C."/>
            <person name="Subramanian S."/>
            <person name="Sycamore N."/>
            <person name="Tracey A."/>
            <person name="Tromans A."/>
            <person name="Van Helmond Z."/>
            <person name="Wall M."/>
            <person name="Wallis J.M."/>
            <person name="White S."/>
            <person name="Whitehead S.L."/>
            <person name="Wilkinson J.E."/>
            <person name="Willey D.L."/>
            <person name="Williams H."/>
            <person name="Wilming L."/>
            <person name="Wray P.W."/>
            <person name="Wu Z."/>
            <person name="Coulson A."/>
            <person name="Vaudin M."/>
            <person name="Sulston J.E."/>
            <person name="Durbin R.M."/>
            <person name="Hubbard T."/>
            <person name="Wooster R."/>
            <person name="Dunham I."/>
            <person name="Carter N.P."/>
            <person name="McVean G."/>
            <person name="Ross M.T."/>
            <person name="Harrow J."/>
            <person name="Olson M.V."/>
            <person name="Beck S."/>
            <person name="Rogers J."/>
            <person name="Bentley D.R."/>
        </authorList>
    </citation>
    <scope>NUCLEOTIDE SEQUENCE [LARGE SCALE GENOMIC DNA]</scope>
</reference>
<reference key="2">
    <citation type="journal article" date="2004" name="Genome Res.">
        <title>The status, quality, and expansion of the NIH full-length cDNA project: the Mammalian Gene Collection (MGC).</title>
        <authorList>
            <consortium name="The MGC Project Team"/>
        </authorList>
    </citation>
    <scope>NUCLEOTIDE SEQUENCE [LARGE SCALE MRNA]</scope>
</reference>
<sequence>MAQVDSQDRWGEASPLSSLTEEAHDTQMLSMNLESDDEDGGEAEKEGTADPVACPRGSSPVTHENPDLPWPHPLGKEEEKFSDSSSAGGMGQKPVEMSGKASWSRDVTKINETQGSPGASRALGSLPSGLAHKLLGQMQPLGDRLPAGDDGYSGANQDAVLDVPPSFPSNGKYLCAHKSVDTSAGNSSLLCFPRPGSNWDLPTQETHTPAQASATPASLAAAVLAKARNSRKVQNQAGRREGGEAEARPYRCLRGGRAFQKPSKPLSPAETRGGAAKRYACELCGKAYSHRGTLQQHRRLHTGERPYQCSFCDKAYTWSSDHRKHIRTHTGEKPYPCPDCGKAFVRSSDLRKHQRNMHSNNKPFPCSECGLTFNKPLSLLRHQRTHLGAKPFRCPACDREFAVASRMVEHQRVHSGERPFPCPTCGKCFTKSSNLSEHQTLHTGQRPFKCADCGVAFAQPSRLVRHQRIHTGERPFPCTQCGQAFARSSTLKRHQQIHSGEKGFLCAECGRAFRIASELAQHIRMHNGERPYQCEDCGQAFTRSNHLQRHRAKHGTCKKEPIPSSSDE</sequence>
<organism>
    <name type="scientific">Homo sapiens</name>
    <name type="common">Human</name>
    <dbReference type="NCBI Taxonomy" id="9606"/>
    <lineage>
        <taxon>Eukaryota</taxon>
        <taxon>Metazoa</taxon>
        <taxon>Chordata</taxon>
        <taxon>Craniata</taxon>
        <taxon>Vertebrata</taxon>
        <taxon>Euteleostomi</taxon>
        <taxon>Mammalia</taxon>
        <taxon>Eutheria</taxon>
        <taxon>Euarchontoglires</taxon>
        <taxon>Primates</taxon>
        <taxon>Haplorrhini</taxon>
        <taxon>Catarrhini</taxon>
        <taxon>Hominidae</taxon>
        <taxon>Homo</taxon>
    </lineage>
</organism>
<proteinExistence type="evidence at protein level"/>
<feature type="chain" id="PRO_0000252162" description="Zinc finger protein 648">
    <location>
        <begin position="1"/>
        <end position="568"/>
    </location>
</feature>
<feature type="zinc finger region" description="C2H2-type 1" evidence="1">
    <location>
        <begin position="279"/>
        <end position="301"/>
    </location>
</feature>
<feature type="zinc finger region" description="C2H2-type 2" evidence="1">
    <location>
        <begin position="307"/>
        <end position="329"/>
    </location>
</feature>
<feature type="zinc finger region" description="C2H2-type 3" evidence="1">
    <location>
        <begin position="335"/>
        <end position="358"/>
    </location>
</feature>
<feature type="zinc finger region" description="C2H2-type 4" evidence="1">
    <location>
        <begin position="364"/>
        <end position="386"/>
    </location>
</feature>
<feature type="zinc finger region" description="C2H2-type 5" evidence="1">
    <location>
        <begin position="392"/>
        <end position="414"/>
    </location>
</feature>
<feature type="zinc finger region" description="C2H2-type 6" evidence="1">
    <location>
        <begin position="420"/>
        <end position="442"/>
    </location>
</feature>
<feature type="zinc finger region" description="C2H2-type 7" evidence="1">
    <location>
        <begin position="448"/>
        <end position="470"/>
    </location>
</feature>
<feature type="zinc finger region" description="C2H2-type 8" evidence="1">
    <location>
        <begin position="476"/>
        <end position="498"/>
    </location>
</feature>
<feature type="zinc finger region" description="C2H2-type 9" evidence="1">
    <location>
        <begin position="504"/>
        <end position="526"/>
    </location>
</feature>
<feature type="zinc finger region" description="C2H2-type 10" evidence="1">
    <location>
        <begin position="532"/>
        <end position="554"/>
    </location>
</feature>
<feature type="region of interest" description="Disordered" evidence="2">
    <location>
        <begin position="1"/>
        <end position="106"/>
    </location>
</feature>
<feature type="region of interest" description="Disordered" evidence="2">
    <location>
        <begin position="548"/>
        <end position="568"/>
    </location>
</feature>
<feature type="compositionally biased region" description="Basic and acidic residues" evidence="2">
    <location>
        <begin position="1"/>
        <end position="11"/>
    </location>
</feature>
<feature type="sequence variant" id="VAR_052887" description="In dbSNP:rs12564283.">
    <original>E</original>
    <variation>K</variation>
    <location>
        <position position="42"/>
    </location>
</feature>
<feature type="sequence variant" id="VAR_033585" description="In dbSNP:rs12568050.">
    <original>N</original>
    <variation>K</variation>
    <location>
        <position position="111"/>
    </location>
</feature>
<accession>Q5T619</accession>
<accession>B2RP16</accession>
<gene>
    <name type="primary">ZNF648</name>
</gene>
<name>ZN648_HUMAN</name>
<dbReference type="EMBL" id="AL355482">
    <property type="status" value="NOT_ANNOTATED_CDS"/>
    <property type="molecule type" value="Genomic_DNA"/>
</dbReference>
<dbReference type="EMBL" id="BC137223">
    <property type="protein sequence ID" value="AAI37224.1"/>
    <property type="molecule type" value="mRNA"/>
</dbReference>
<dbReference type="EMBL" id="BC137224">
    <property type="protein sequence ID" value="AAI37225.1"/>
    <property type="molecule type" value="mRNA"/>
</dbReference>
<dbReference type="CCDS" id="CCDS30952.1"/>
<dbReference type="RefSeq" id="NP_001009992.1">
    <property type="nucleotide sequence ID" value="NM_001009992.1"/>
</dbReference>
<dbReference type="RefSeq" id="XP_016855790.1">
    <property type="nucleotide sequence ID" value="XM_017000301.1"/>
</dbReference>
<dbReference type="RefSeq" id="XP_016855791.1">
    <property type="nucleotide sequence ID" value="XM_017000302.1"/>
</dbReference>
<dbReference type="RefSeq" id="XP_024309028.1">
    <property type="nucleotide sequence ID" value="XM_024453260.2"/>
</dbReference>
<dbReference type="RefSeq" id="XP_047301678.1">
    <property type="nucleotide sequence ID" value="XM_047445722.1"/>
</dbReference>
<dbReference type="SMR" id="Q5T619"/>
<dbReference type="BioGRID" id="126074">
    <property type="interactions" value="64"/>
</dbReference>
<dbReference type="FunCoup" id="Q5T619">
    <property type="interactions" value="1"/>
</dbReference>
<dbReference type="IntAct" id="Q5T619">
    <property type="interactions" value="60"/>
</dbReference>
<dbReference type="STRING" id="9606.ENSP00000344129"/>
<dbReference type="GlyGen" id="Q5T619">
    <property type="glycosylation" value="3 sites, 1 O-linked glycan (2 sites)"/>
</dbReference>
<dbReference type="iPTMnet" id="Q5T619"/>
<dbReference type="PhosphoSitePlus" id="Q5T619"/>
<dbReference type="BioMuta" id="ZNF648"/>
<dbReference type="DMDM" id="74762240"/>
<dbReference type="MassIVE" id="Q5T619"/>
<dbReference type="PaxDb" id="9606-ENSP00000344129"/>
<dbReference type="PeptideAtlas" id="Q5T619"/>
<dbReference type="ProteomicsDB" id="64563"/>
<dbReference type="Antibodypedia" id="47087">
    <property type="antibodies" value="79 antibodies from 16 providers"/>
</dbReference>
<dbReference type="DNASU" id="127665"/>
<dbReference type="Ensembl" id="ENST00000339948.3">
    <property type="protein sequence ID" value="ENSP00000344129.3"/>
    <property type="gene ID" value="ENSG00000179930.6"/>
</dbReference>
<dbReference type="GeneID" id="127665"/>
<dbReference type="KEGG" id="hsa:127665"/>
<dbReference type="MANE-Select" id="ENST00000339948.3">
    <property type="protein sequence ID" value="ENSP00000344129.3"/>
    <property type="RefSeq nucleotide sequence ID" value="NM_001009992.1"/>
    <property type="RefSeq protein sequence ID" value="NP_001009992.1"/>
</dbReference>
<dbReference type="UCSC" id="uc001goz.3">
    <property type="organism name" value="human"/>
</dbReference>
<dbReference type="AGR" id="HGNC:18190"/>
<dbReference type="CTD" id="127665"/>
<dbReference type="GeneCards" id="ZNF648"/>
<dbReference type="HGNC" id="HGNC:18190">
    <property type="gene designation" value="ZNF648"/>
</dbReference>
<dbReference type="HPA" id="ENSG00000179930">
    <property type="expression patterns" value="Not detected"/>
</dbReference>
<dbReference type="neXtProt" id="NX_Q5T619"/>
<dbReference type="OpenTargets" id="ENSG00000179930"/>
<dbReference type="PharmGKB" id="PA134974398"/>
<dbReference type="VEuPathDB" id="HostDB:ENSG00000179930"/>
<dbReference type="eggNOG" id="KOG1721">
    <property type="taxonomic scope" value="Eukaryota"/>
</dbReference>
<dbReference type="GeneTree" id="ENSGT00940000163676"/>
<dbReference type="HOGENOM" id="CLU_002678_80_0_1"/>
<dbReference type="InParanoid" id="Q5T619"/>
<dbReference type="OMA" id="KASWGRD"/>
<dbReference type="OrthoDB" id="654211at2759"/>
<dbReference type="PAN-GO" id="Q5T619">
    <property type="GO annotations" value="3 GO annotations based on evolutionary models"/>
</dbReference>
<dbReference type="PhylomeDB" id="Q5T619"/>
<dbReference type="TreeFam" id="TF337055"/>
<dbReference type="PathwayCommons" id="Q5T619"/>
<dbReference type="SignaLink" id="Q5T619"/>
<dbReference type="BioGRID-ORCS" id="127665">
    <property type="hits" value="21 hits in 1160 CRISPR screens"/>
</dbReference>
<dbReference type="ChiTaRS" id="ZNF648">
    <property type="organism name" value="human"/>
</dbReference>
<dbReference type="GenomeRNAi" id="127665"/>
<dbReference type="Pharos" id="Q5T619">
    <property type="development level" value="Tdark"/>
</dbReference>
<dbReference type="PRO" id="PR:Q5T619"/>
<dbReference type="Proteomes" id="UP000005640">
    <property type="component" value="Chromosome 1"/>
</dbReference>
<dbReference type="RNAct" id="Q5T619">
    <property type="molecule type" value="protein"/>
</dbReference>
<dbReference type="Bgee" id="ENSG00000179930">
    <property type="expression patterns" value="Expressed in male germ line stem cell (sensu Vertebrata) in testis and 14 other cell types or tissues"/>
</dbReference>
<dbReference type="ExpressionAtlas" id="Q5T619">
    <property type="expression patterns" value="baseline and differential"/>
</dbReference>
<dbReference type="GO" id="GO:0005634">
    <property type="term" value="C:nucleus"/>
    <property type="evidence" value="ECO:0007669"/>
    <property type="project" value="UniProtKB-SubCell"/>
</dbReference>
<dbReference type="GO" id="GO:0000981">
    <property type="term" value="F:DNA-binding transcription factor activity, RNA polymerase II-specific"/>
    <property type="evidence" value="ECO:0000318"/>
    <property type="project" value="GO_Central"/>
</dbReference>
<dbReference type="GO" id="GO:0000978">
    <property type="term" value="F:RNA polymerase II cis-regulatory region sequence-specific DNA binding"/>
    <property type="evidence" value="ECO:0000318"/>
    <property type="project" value="GO_Central"/>
</dbReference>
<dbReference type="GO" id="GO:0008270">
    <property type="term" value="F:zinc ion binding"/>
    <property type="evidence" value="ECO:0007669"/>
    <property type="project" value="UniProtKB-KW"/>
</dbReference>
<dbReference type="GO" id="GO:0006355">
    <property type="term" value="P:regulation of DNA-templated transcription"/>
    <property type="evidence" value="ECO:0000318"/>
    <property type="project" value="GO_Central"/>
</dbReference>
<dbReference type="FunFam" id="3.30.160.60:FF:000185">
    <property type="entry name" value="zinc finger protein 319"/>
    <property type="match status" value="3"/>
</dbReference>
<dbReference type="FunFam" id="3.30.160.60:FF:001238">
    <property type="entry name" value="Zinc finger protein 648"/>
    <property type="match status" value="1"/>
</dbReference>
<dbReference type="FunFam" id="3.30.160.60:FF:001822">
    <property type="entry name" value="Zinc finger protein 648"/>
    <property type="match status" value="1"/>
</dbReference>
<dbReference type="FunFam" id="3.30.160.60:FF:002291">
    <property type="entry name" value="Zinc finger protein 648"/>
    <property type="match status" value="1"/>
</dbReference>
<dbReference type="FunFam" id="3.30.160.60:FF:000771">
    <property type="entry name" value="zinc finger protein 648"/>
    <property type="match status" value="1"/>
</dbReference>
<dbReference type="FunFam" id="3.30.160.60:FF:000785">
    <property type="entry name" value="zinc finger protein 648"/>
    <property type="match status" value="1"/>
</dbReference>
<dbReference type="FunFam" id="3.30.160.60:FF:000585">
    <property type="entry name" value="zinc finger protein 784"/>
    <property type="match status" value="1"/>
</dbReference>
<dbReference type="FunFam" id="3.30.160.60:FF:002208">
    <property type="entry name" value="Zinc finger protein 787"/>
    <property type="match status" value="1"/>
</dbReference>
<dbReference type="Gene3D" id="3.30.160.60">
    <property type="entry name" value="Classic Zinc Finger"/>
    <property type="match status" value="10"/>
</dbReference>
<dbReference type="InterPro" id="IPR036236">
    <property type="entry name" value="Znf_C2H2_sf"/>
</dbReference>
<dbReference type="InterPro" id="IPR013087">
    <property type="entry name" value="Znf_C2H2_type"/>
</dbReference>
<dbReference type="PANTHER" id="PTHR14003">
    <property type="entry name" value="TRANSCRIPTIONAL REPRESSOR PROTEIN YY"/>
    <property type="match status" value="1"/>
</dbReference>
<dbReference type="PANTHER" id="PTHR14003:SF23">
    <property type="entry name" value="ZINC FINGER PROTEIN 143"/>
    <property type="match status" value="1"/>
</dbReference>
<dbReference type="Pfam" id="PF00096">
    <property type="entry name" value="zf-C2H2"/>
    <property type="match status" value="8"/>
</dbReference>
<dbReference type="SMART" id="SM00355">
    <property type="entry name" value="ZnF_C2H2"/>
    <property type="match status" value="10"/>
</dbReference>
<dbReference type="SUPFAM" id="SSF57667">
    <property type="entry name" value="beta-beta-alpha zinc fingers"/>
    <property type="match status" value="6"/>
</dbReference>
<dbReference type="PROSITE" id="PS00028">
    <property type="entry name" value="ZINC_FINGER_C2H2_1"/>
    <property type="match status" value="10"/>
</dbReference>
<dbReference type="PROSITE" id="PS50157">
    <property type="entry name" value="ZINC_FINGER_C2H2_2"/>
    <property type="match status" value="10"/>
</dbReference>